<comment type="function">
    <text evidence="1">Binds 23S rRNA and is also seen to make contacts with the A and possibly P site tRNAs.</text>
</comment>
<comment type="subunit">
    <text evidence="1">Part of the 50S ribosomal subunit.</text>
</comment>
<comment type="similarity">
    <text evidence="1">Belongs to the universal ribosomal protein uL16 family.</text>
</comment>
<reference key="1">
    <citation type="submission" date="2007-08" db="EMBL/GenBank/DDBJ databases">
        <authorList>
            <consortium name="The Vibrio harveyi Genome Sequencing Project"/>
            <person name="Bassler B."/>
            <person name="Clifton S.W."/>
            <person name="Fulton L."/>
            <person name="Delehaunty K."/>
            <person name="Fronick C."/>
            <person name="Harrison M."/>
            <person name="Markivic C."/>
            <person name="Fulton R."/>
            <person name="Tin-Wollam A.-M."/>
            <person name="Shah N."/>
            <person name="Pepin K."/>
            <person name="Nash W."/>
            <person name="Thiruvilangam P."/>
            <person name="Bhonagiri V."/>
            <person name="Waters C."/>
            <person name="Tu K.C."/>
            <person name="Irgon J."/>
            <person name="Wilson R.K."/>
        </authorList>
    </citation>
    <scope>NUCLEOTIDE SEQUENCE [LARGE SCALE GENOMIC DNA]</scope>
    <source>
        <strain>ATCC BAA-1116 / BB120</strain>
    </source>
</reference>
<organism>
    <name type="scientific">Vibrio campbellii (strain ATCC BAA-1116)</name>
    <dbReference type="NCBI Taxonomy" id="2902295"/>
    <lineage>
        <taxon>Bacteria</taxon>
        <taxon>Pseudomonadati</taxon>
        <taxon>Pseudomonadota</taxon>
        <taxon>Gammaproteobacteria</taxon>
        <taxon>Vibrionales</taxon>
        <taxon>Vibrionaceae</taxon>
        <taxon>Vibrio</taxon>
    </lineage>
</organism>
<gene>
    <name evidence="1" type="primary">rplP</name>
    <name type="ordered locus">VIBHAR_00737</name>
</gene>
<name>RL16_VIBC1</name>
<evidence type="ECO:0000255" key="1">
    <source>
        <dbReference type="HAMAP-Rule" id="MF_01342"/>
    </source>
</evidence>
<evidence type="ECO:0000305" key="2"/>
<keyword id="KW-0687">Ribonucleoprotein</keyword>
<keyword id="KW-0689">Ribosomal protein</keyword>
<keyword id="KW-0694">RNA-binding</keyword>
<keyword id="KW-0699">rRNA-binding</keyword>
<keyword id="KW-0820">tRNA-binding</keyword>
<feature type="chain" id="PRO_1000054731" description="Large ribosomal subunit protein uL16">
    <location>
        <begin position="1"/>
        <end position="136"/>
    </location>
</feature>
<protein>
    <recommendedName>
        <fullName evidence="1">Large ribosomal subunit protein uL16</fullName>
    </recommendedName>
    <alternativeName>
        <fullName evidence="2">50S ribosomal protein L16</fullName>
    </alternativeName>
</protein>
<proteinExistence type="inferred from homology"/>
<accession>A7N0I4</accession>
<dbReference type="EMBL" id="CP000789">
    <property type="protein sequence ID" value="ABU69738.1"/>
    <property type="molecule type" value="Genomic_DNA"/>
</dbReference>
<dbReference type="RefSeq" id="WP_005379577.1">
    <property type="nucleotide sequence ID" value="NC_022269.1"/>
</dbReference>
<dbReference type="SMR" id="A7N0I4"/>
<dbReference type="GeneID" id="83583116"/>
<dbReference type="KEGG" id="vha:VIBHAR_00737"/>
<dbReference type="PATRIC" id="fig|338187.25.peg.1877"/>
<dbReference type="Proteomes" id="UP000008152">
    <property type="component" value="Chromosome I"/>
</dbReference>
<dbReference type="GO" id="GO:0022625">
    <property type="term" value="C:cytosolic large ribosomal subunit"/>
    <property type="evidence" value="ECO:0007669"/>
    <property type="project" value="TreeGrafter"/>
</dbReference>
<dbReference type="GO" id="GO:0019843">
    <property type="term" value="F:rRNA binding"/>
    <property type="evidence" value="ECO:0007669"/>
    <property type="project" value="UniProtKB-UniRule"/>
</dbReference>
<dbReference type="GO" id="GO:0003735">
    <property type="term" value="F:structural constituent of ribosome"/>
    <property type="evidence" value="ECO:0007669"/>
    <property type="project" value="InterPro"/>
</dbReference>
<dbReference type="GO" id="GO:0000049">
    <property type="term" value="F:tRNA binding"/>
    <property type="evidence" value="ECO:0007669"/>
    <property type="project" value="UniProtKB-KW"/>
</dbReference>
<dbReference type="GO" id="GO:0006412">
    <property type="term" value="P:translation"/>
    <property type="evidence" value="ECO:0007669"/>
    <property type="project" value="UniProtKB-UniRule"/>
</dbReference>
<dbReference type="CDD" id="cd01433">
    <property type="entry name" value="Ribosomal_L16_L10e"/>
    <property type="match status" value="1"/>
</dbReference>
<dbReference type="FunFam" id="3.90.1170.10:FF:000001">
    <property type="entry name" value="50S ribosomal protein L16"/>
    <property type="match status" value="1"/>
</dbReference>
<dbReference type="Gene3D" id="3.90.1170.10">
    <property type="entry name" value="Ribosomal protein L10e/L16"/>
    <property type="match status" value="1"/>
</dbReference>
<dbReference type="HAMAP" id="MF_01342">
    <property type="entry name" value="Ribosomal_uL16"/>
    <property type="match status" value="1"/>
</dbReference>
<dbReference type="InterPro" id="IPR047873">
    <property type="entry name" value="Ribosomal_uL16"/>
</dbReference>
<dbReference type="InterPro" id="IPR000114">
    <property type="entry name" value="Ribosomal_uL16_bact-type"/>
</dbReference>
<dbReference type="InterPro" id="IPR020798">
    <property type="entry name" value="Ribosomal_uL16_CS"/>
</dbReference>
<dbReference type="InterPro" id="IPR016180">
    <property type="entry name" value="Ribosomal_uL16_dom"/>
</dbReference>
<dbReference type="InterPro" id="IPR036920">
    <property type="entry name" value="Ribosomal_uL16_sf"/>
</dbReference>
<dbReference type="NCBIfam" id="TIGR01164">
    <property type="entry name" value="rplP_bact"/>
    <property type="match status" value="1"/>
</dbReference>
<dbReference type="PANTHER" id="PTHR12220">
    <property type="entry name" value="50S/60S RIBOSOMAL PROTEIN L16"/>
    <property type="match status" value="1"/>
</dbReference>
<dbReference type="PANTHER" id="PTHR12220:SF13">
    <property type="entry name" value="LARGE RIBOSOMAL SUBUNIT PROTEIN UL16M"/>
    <property type="match status" value="1"/>
</dbReference>
<dbReference type="Pfam" id="PF00252">
    <property type="entry name" value="Ribosomal_L16"/>
    <property type="match status" value="1"/>
</dbReference>
<dbReference type="PRINTS" id="PR00060">
    <property type="entry name" value="RIBOSOMALL16"/>
</dbReference>
<dbReference type="SUPFAM" id="SSF54686">
    <property type="entry name" value="Ribosomal protein L16p/L10e"/>
    <property type="match status" value="1"/>
</dbReference>
<dbReference type="PROSITE" id="PS00586">
    <property type="entry name" value="RIBOSOMAL_L16_1"/>
    <property type="match status" value="1"/>
</dbReference>
<sequence length="136" mass="15525">MLQPKRTKFRKVQTGRNRGLAKGTDVSFGEFGLKAVGRGRLTARQIEAARRAMTRHVKRQGKIWIRVFPDKPITEKPLEVRQGKGKGNVEYWVAQIQPGKVMYEMGGVPEELAREAFRLAARKLPFKTTFVTKQVM</sequence>